<sequence>MRLLLLLVGLSTLLNHSYTQNCKTPCLPNAKCEVLDEVAACFCSTGYTGNGITICEDVDECNETSVCGDHAVCENTNGGFSCFCVEGYQTSTGKTQFTPNDGSYCQDVDECNETSVCGDHAVCENTNGGFSCFCVEGYQTSTGKTQFTPNDGSYCQEIVNSNCHLEHDCIAANINKTLKRIGPITEQLTLLHEIYKNSEAELSLVDIVTYIEILTESSSLQGYIKNTTSPKDAYFGSALTEFGKTVNNFVEKNTHEMWDQLPTNRRRLHLTKLMHAAEHVTLQISQNIQKNTQFDMNSTDLALKVFVFDSVHMKHTHPHMNVDGGYVKISPRRKSAYDPNGNVIVAFLCYRSIGPLLSSSDDFLLGAQSDNSKGKEKVISSVISASISSNPPTLYELEKITFTLSHVKLSDKHQTQCAFWNYSVDDMNNGSWSSEGCELTYSNDTHTSCRCSHLTHFAILMSPSTSIEVKDYNILTRITQLGIIISLICLAICIFTFWFFSEIQSTRTTIHKNLCCSLFLAQLVFLVGININTNKLVCSIIAGLLHYFFLAAFAWMCIEGIYLYLIVVGLIYNKGFLHKNFYIFGYLSPAVVVGFSASLGYRYYGTTKVCWLSTENNFIWSFIGPACLIILVNLLAFGVIIYKVFRHTAGLKPEVSCYENIRSCARGALALLFLLGTTWTFGVLHVVHASVVTAYLFTVSNAFQGMFIFLFLCVLSRKIQEEYYRLFKNVPCCFECLR</sequence>
<organism>
    <name type="scientific">Rattus norvegicus</name>
    <name type="common">Rat</name>
    <dbReference type="NCBI Taxonomy" id="10116"/>
    <lineage>
        <taxon>Eukaryota</taxon>
        <taxon>Metazoa</taxon>
        <taxon>Chordata</taxon>
        <taxon>Craniata</taxon>
        <taxon>Vertebrata</taxon>
        <taxon>Euteleostomi</taxon>
        <taxon>Mammalia</taxon>
        <taxon>Eutheria</taxon>
        <taxon>Euarchontoglires</taxon>
        <taxon>Glires</taxon>
        <taxon>Rodentia</taxon>
        <taxon>Myomorpha</taxon>
        <taxon>Muroidea</taxon>
        <taxon>Muridae</taxon>
        <taxon>Murinae</taxon>
        <taxon>Rattus</taxon>
    </lineage>
</organism>
<evidence type="ECO:0000250" key="1">
    <source>
        <dbReference type="UniProtKB" id="Q9HBW9"/>
    </source>
</evidence>
<evidence type="ECO:0000255" key="2"/>
<evidence type="ECO:0000255" key="3">
    <source>
        <dbReference type="PROSITE-ProRule" id="PRU00076"/>
    </source>
</evidence>
<evidence type="ECO:0000255" key="4">
    <source>
        <dbReference type="PROSITE-ProRule" id="PRU00098"/>
    </source>
</evidence>
<evidence type="ECO:0000269" key="5">
    <source>
    </source>
</evidence>
<evidence type="ECO:0000303" key="6">
    <source>
    </source>
</evidence>
<evidence type="ECO:0000305" key="7"/>
<gene>
    <name type="primary">Adgrl4</name>
    <name type="synonym">Eltd1</name>
    <name type="synonym">Etl</name>
</gene>
<dbReference type="EMBL" id="AF192401">
    <property type="protein sequence ID" value="AAG33019.1"/>
    <property type="molecule type" value="mRNA"/>
</dbReference>
<dbReference type="EMBL" id="AF192402">
    <property type="protein sequence ID" value="AAG33020.1"/>
    <property type="molecule type" value="mRNA"/>
</dbReference>
<dbReference type="RefSeq" id="NP_071630.1">
    <molecule id="Q9ESC1-1"/>
    <property type="nucleotide sequence ID" value="NM_022294.1"/>
</dbReference>
<dbReference type="SMR" id="Q9ESC1"/>
<dbReference type="FunCoup" id="Q9ESC1">
    <property type="interactions" value="136"/>
</dbReference>
<dbReference type="STRING" id="10116.ENSRNOP00000071560"/>
<dbReference type="MEROPS" id="P02.013"/>
<dbReference type="GlyCosmos" id="Q9ESC1">
    <property type="glycosylation" value="8 sites, No reported glycans"/>
</dbReference>
<dbReference type="GlyGen" id="Q9ESC1">
    <property type="glycosylation" value="8 sites"/>
</dbReference>
<dbReference type="PhosphoSitePlus" id="Q9ESC1"/>
<dbReference type="PaxDb" id="10116-ENSRNOP00000045890"/>
<dbReference type="Ensembl" id="ENSRNOT00000047564.5">
    <molecule id="Q9ESC1-2"/>
    <property type="protein sequence ID" value="ENSRNOP00000045890.3"/>
    <property type="gene ID" value="ENSRNOG00000033940.6"/>
</dbReference>
<dbReference type="GeneID" id="64124"/>
<dbReference type="KEGG" id="rno:64124"/>
<dbReference type="AGR" id="RGD:621136"/>
<dbReference type="CTD" id="64123"/>
<dbReference type="RGD" id="621136">
    <property type="gene designation" value="Adgrl4"/>
</dbReference>
<dbReference type="VEuPathDB" id="HostDB:ENSRNOG00000033940"/>
<dbReference type="eggNOG" id="KOG4193">
    <property type="taxonomic scope" value="Eukaryota"/>
</dbReference>
<dbReference type="GeneTree" id="ENSGT00940000158252"/>
<dbReference type="InParanoid" id="Q9ESC1"/>
<dbReference type="OrthoDB" id="45333at9989"/>
<dbReference type="PhylomeDB" id="Q9ESC1"/>
<dbReference type="TreeFam" id="TF316380"/>
<dbReference type="PRO" id="PR:Q9ESC1"/>
<dbReference type="Proteomes" id="UP000002494">
    <property type="component" value="Chromosome 2"/>
</dbReference>
<dbReference type="Bgee" id="ENSRNOG00000033940">
    <property type="expression patterns" value="Expressed in lung and 19 other cell types or tissues"/>
</dbReference>
<dbReference type="GO" id="GO:0031410">
    <property type="term" value="C:cytoplasmic vesicle"/>
    <property type="evidence" value="ECO:0000314"/>
    <property type="project" value="UniProtKB"/>
</dbReference>
<dbReference type="GO" id="GO:0005886">
    <property type="term" value="C:plasma membrane"/>
    <property type="evidence" value="ECO:0000314"/>
    <property type="project" value="UniProtKB"/>
</dbReference>
<dbReference type="GO" id="GO:0005509">
    <property type="term" value="F:calcium ion binding"/>
    <property type="evidence" value="ECO:0007669"/>
    <property type="project" value="InterPro"/>
</dbReference>
<dbReference type="GO" id="GO:0004930">
    <property type="term" value="F:G protein-coupled receptor activity"/>
    <property type="evidence" value="ECO:0000318"/>
    <property type="project" value="GO_Central"/>
</dbReference>
<dbReference type="GO" id="GO:0007189">
    <property type="term" value="P:adenylate cyclase-activating G protein-coupled receptor signaling pathway"/>
    <property type="evidence" value="ECO:0000318"/>
    <property type="project" value="GO_Central"/>
</dbReference>
<dbReference type="GO" id="GO:0007166">
    <property type="term" value="P:cell surface receptor signaling pathway"/>
    <property type="evidence" value="ECO:0007669"/>
    <property type="project" value="InterPro"/>
</dbReference>
<dbReference type="GO" id="GO:0065003">
    <property type="term" value="P:protein-containing complex assembly"/>
    <property type="evidence" value="ECO:0000314"/>
    <property type="project" value="RGD"/>
</dbReference>
<dbReference type="CDD" id="cd15437">
    <property type="entry name" value="7tmB2_ETL"/>
    <property type="match status" value="1"/>
</dbReference>
<dbReference type="CDD" id="cd00054">
    <property type="entry name" value="EGF_CA"/>
    <property type="match status" value="2"/>
</dbReference>
<dbReference type="FunFam" id="1.20.1070.10:FF:000064">
    <property type="entry name" value="adhesion G protein-coupled receptor L4 isoform X1"/>
    <property type="match status" value="1"/>
</dbReference>
<dbReference type="FunFam" id="2.60.220.50:FF:000010">
    <property type="entry name" value="adhesion G protein-coupled receptor L4 isoform X1"/>
    <property type="match status" value="1"/>
</dbReference>
<dbReference type="FunFam" id="2.10.25.10:FF:000526">
    <property type="entry name" value="Dumpy, isoform J"/>
    <property type="match status" value="1"/>
</dbReference>
<dbReference type="FunFam" id="2.10.25.10:FF:000038">
    <property type="entry name" value="Fibrillin 2"/>
    <property type="match status" value="2"/>
</dbReference>
<dbReference type="Gene3D" id="2.60.220.50">
    <property type="match status" value="1"/>
</dbReference>
<dbReference type="Gene3D" id="2.10.25.10">
    <property type="entry name" value="Laminin"/>
    <property type="match status" value="3"/>
</dbReference>
<dbReference type="Gene3D" id="1.20.1070.10">
    <property type="entry name" value="Rhodopsin 7-helix transmembrane proteins"/>
    <property type="match status" value="1"/>
</dbReference>
<dbReference type="InterPro" id="IPR001881">
    <property type="entry name" value="EGF-like_Ca-bd_dom"/>
</dbReference>
<dbReference type="InterPro" id="IPR000742">
    <property type="entry name" value="EGF-like_dom"/>
</dbReference>
<dbReference type="InterPro" id="IPR000152">
    <property type="entry name" value="EGF-type_Asp/Asn_hydroxyl_site"/>
</dbReference>
<dbReference type="InterPro" id="IPR018097">
    <property type="entry name" value="EGF_Ca-bd_CS"/>
</dbReference>
<dbReference type="InterPro" id="IPR057244">
    <property type="entry name" value="GAIN_B"/>
</dbReference>
<dbReference type="InterPro" id="IPR032471">
    <property type="entry name" value="GAIN_dom_N"/>
</dbReference>
<dbReference type="InterPro" id="IPR046338">
    <property type="entry name" value="GAIN_dom_sf"/>
</dbReference>
<dbReference type="InterPro" id="IPR017981">
    <property type="entry name" value="GPCR_2-like_7TM"/>
</dbReference>
<dbReference type="InterPro" id="IPR000832">
    <property type="entry name" value="GPCR_2_secretin-like"/>
</dbReference>
<dbReference type="InterPro" id="IPR017983">
    <property type="entry name" value="GPCR_2_secretin-like_CS"/>
</dbReference>
<dbReference type="InterPro" id="IPR000203">
    <property type="entry name" value="GPS"/>
</dbReference>
<dbReference type="InterPro" id="IPR049883">
    <property type="entry name" value="NOTCH1_EGF-like"/>
</dbReference>
<dbReference type="PANTHER" id="PTHR12011:SF59">
    <property type="entry name" value="ADHESION G PROTEIN-COUPLED RECEPTOR L4"/>
    <property type="match status" value="1"/>
</dbReference>
<dbReference type="PANTHER" id="PTHR12011">
    <property type="entry name" value="ADHESION G-PROTEIN COUPLED RECEPTOR"/>
    <property type="match status" value="1"/>
</dbReference>
<dbReference type="Pfam" id="PF00002">
    <property type="entry name" value="7tm_2"/>
    <property type="match status" value="1"/>
</dbReference>
<dbReference type="Pfam" id="PF07645">
    <property type="entry name" value="EGF_CA"/>
    <property type="match status" value="2"/>
</dbReference>
<dbReference type="Pfam" id="PF16489">
    <property type="entry name" value="GAIN"/>
    <property type="match status" value="1"/>
</dbReference>
<dbReference type="Pfam" id="PF01825">
    <property type="entry name" value="GPS"/>
    <property type="match status" value="1"/>
</dbReference>
<dbReference type="PRINTS" id="PR00249">
    <property type="entry name" value="GPCRSECRETIN"/>
</dbReference>
<dbReference type="SMART" id="SM00181">
    <property type="entry name" value="EGF"/>
    <property type="match status" value="3"/>
</dbReference>
<dbReference type="SMART" id="SM00179">
    <property type="entry name" value="EGF_CA"/>
    <property type="match status" value="2"/>
</dbReference>
<dbReference type="SMART" id="SM00303">
    <property type="entry name" value="GPS"/>
    <property type="match status" value="1"/>
</dbReference>
<dbReference type="SUPFAM" id="SSF57196">
    <property type="entry name" value="EGF/Laminin"/>
    <property type="match status" value="2"/>
</dbReference>
<dbReference type="PROSITE" id="PS00010">
    <property type="entry name" value="ASX_HYDROXYL"/>
    <property type="match status" value="2"/>
</dbReference>
<dbReference type="PROSITE" id="PS01186">
    <property type="entry name" value="EGF_2"/>
    <property type="match status" value="1"/>
</dbReference>
<dbReference type="PROSITE" id="PS50026">
    <property type="entry name" value="EGF_3"/>
    <property type="match status" value="3"/>
</dbReference>
<dbReference type="PROSITE" id="PS01187">
    <property type="entry name" value="EGF_CA"/>
    <property type="match status" value="2"/>
</dbReference>
<dbReference type="PROSITE" id="PS00650">
    <property type="entry name" value="G_PROTEIN_RECEP_F2_2"/>
    <property type="match status" value="1"/>
</dbReference>
<dbReference type="PROSITE" id="PS50261">
    <property type="entry name" value="G_PROTEIN_RECEP_F2_4"/>
    <property type="match status" value="1"/>
</dbReference>
<dbReference type="PROSITE" id="PS50221">
    <property type="entry name" value="GAIN_B"/>
    <property type="match status" value="1"/>
</dbReference>
<proteinExistence type="evidence at protein level"/>
<name>AGRL4_RAT</name>
<keyword id="KW-0025">Alternative splicing</keyword>
<keyword id="KW-0106">Calcium</keyword>
<keyword id="KW-1003">Cell membrane</keyword>
<keyword id="KW-1015">Disulfide bond</keyword>
<keyword id="KW-0245">EGF-like domain</keyword>
<keyword id="KW-0297">G-protein coupled receptor</keyword>
<keyword id="KW-0325">Glycoprotein</keyword>
<keyword id="KW-0472">Membrane</keyword>
<keyword id="KW-0675">Receptor</keyword>
<keyword id="KW-1185">Reference proteome</keyword>
<keyword id="KW-0677">Repeat</keyword>
<keyword id="KW-0732">Signal</keyword>
<keyword id="KW-0807">Transducer</keyword>
<keyword id="KW-0812">Transmembrane</keyword>
<keyword id="KW-1133">Transmembrane helix</keyword>
<accession>Q9ESC1</accession>
<accession>Q9ESC0</accession>
<feature type="signal peptide" evidence="2">
    <location>
        <begin position="1"/>
        <end position="19"/>
    </location>
</feature>
<feature type="chain" id="PRO_0000012872" description="Adhesion G protein-coupled receptor L4">
    <location>
        <begin position="20"/>
        <end position="738"/>
    </location>
</feature>
<feature type="topological domain" description="Extracellular" evidence="7">
    <location>
        <begin position="20"/>
        <end position="480"/>
    </location>
</feature>
<feature type="transmembrane region" description="Helical; Name=1" evidence="2">
    <location>
        <begin position="481"/>
        <end position="501"/>
    </location>
</feature>
<feature type="topological domain" description="Cytoplasmic" evidence="7">
    <location>
        <begin position="502"/>
        <end position="522"/>
    </location>
</feature>
<feature type="transmembrane region" description="Helical; Name=2" evidence="2">
    <location>
        <begin position="523"/>
        <end position="543"/>
    </location>
</feature>
<feature type="topological domain" description="Extracellular" evidence="7">
    <location>
        <begin position="544"/>
        <end position="547"/>
    </location>
</feature>
<feature type="transmembrane region" description="Helical; Name=3" evidence="2">
    <location>
        <begin position="548"/>
        <end position="568"/>
    </location>
</feature>
<feature type="topological domain" description="Cytoplasmic" evidence="7">
    <location>
        <begin position="569"/>
        <end position="580"/>
    </location>
</feature>
<feature type="transmembrane region" description="Helical; Name=4" evidence="2">
    <location>
        <begin position="581"/>
        <end position="601"/>
    </location>
</feature>
<feature type="topological domain" description="Extracellular" evidence="7">
    <location>
        <begin position="602"/>
        <end position="621"/>
    </location>
</feature>
<feature type="transmembrane region" description="Helical; Name=5" evidence="2">
    <location>
        <begin position="622"/>
        <end position="642"/>
    </location>
</feature>
<feature type="topological domain" description="Cytoplasmic" evidence="7">
    <location>
        <begin position="643"/>
        <end position="666"/>
    </location>
</feature>
<feature type="transmembrane region" description="Helical; Name=6" evidence="2">
    <location>
        <begin position="667"/>
        <end position="687"/>
    </location>
</feature>
<feature type="topological domain" description="Extracellular" evidence="7">
    <location>
        <begin position="688"/>
        <end position="694"/>
    </location>
</feature>
<feature type="transmembrane region" description="Helical; Name=7" evidence="2">
    <location>
        <begin position="695"/>
        <end position="715"/>
    </location>
</feature>
<feature type="topological domain" description="Cytoplasmic" evidence="7">
    <location>
        <begin position="716"/>
        <end position="738"/>
    </location>
</feature>
<feature type="domain" description="EGF-like 1" evidence="3">
    <location>
        <begin position="20"/>
        <end position="56"/>
    </location>
</feature>
<feature type="domain" description="EGF-like 2; calcium-binding" evidence="3">
    <location>
        <begin position="57"/>
        <end position="106"/>
    </location>
</feature>
<feature type="domain" description="EGF-like 3; calcium-binding" evidence="3">
    <location>
        <begin position="107"/>
        <end position="156"/>
    </location>
</feature>
<feature type="domain" description="GAIN-B" evidence="4">
    <location>
        <begin position="292"/>
        <end position="467"/>
    </location>
</feature>
<feature type="region of interest" description="GPS" evidence="4">
    <location>
        <begin position="417"/>
        <end position="467"/>
    </location>
</feature>
<feature type="site" description="Cleavage; by autolysis" evidence="4 5">
    <location>
        <begin position="454"/>
        <end position="455"/>
    </location>
</feature>
<feature type="glycosylation site" description="N-linked (GlcNAc...) asparagine" evidence="2">
    <location>
        <position position="62"/>
    </location>
</feature>
<feature type="glycosylation site" description="N-linked (GlcNAc...) asparagine" evidence="2">
    <location>
        <position position="112"/>
    </location>
</feature>
<feature type="glycosylation site" description="N-linked (GlcNAc...) asparagine" evidence="2">
    <location>
        <position position="175"/>
    </location>
</feature>
<feature type="glycosylation site" description="N-linked (GlcNAc...) asparagine" evidence="2">
    <location>
        <position position="226"/>
    </location>
</feature>
<feature type="glycosylation site" description="N-linked (GlcNAc...) asparagine" evidence="2">
    <location>
        <position position="297"/>
    </location>
</feature>
<feature type="glycosylation site" description="N-linked (GlcNAc...) asparagine" evidence="2">
    <location>
        <position position="421"/>
    </location>
</feature>
<feature type="glycosylation site" description="N-linked (GlcNAc...) asparagine" evidence="2">
    <location>
        <position position="429"/>
    </location>
</feature>
<feature type="glycosylation site" description="N-linked (GlcNAc...) asparagine" evidence="2">
    <location>
        <position position="443"/>
    </location>
</feature>
<feature type="disulfide bond" evidence="3">
    <location>
        <begin position="22"/>
        <end position="32"/>
    </location>
</feature>
<feature type="disulfide bond" evidence="3">
    <location>
        <begin position="26"/>
        <end position="41"/>
    </location>
</feature>
<feature type="disulfide bond" evidence="3">
    <location>
        <begin position="43"/>
        <end position="55"/>
    </location>
</feature>
<feature type="disulfide bond" evidence="3">
    <location>
        <begin position="61"/>
        <end position="73"/>
    </location>
</feature>
<feature type="disulfide bond" evidence="3">
    <location>
        <begin position="67"/>
        <end position="82"/>
    </location>
</feature>
<feature type="disulfide bond" evidence="3">
    <location>
        <begin position="84"/>
        <end position="105"/>
    </location>
</feature>
<feature type="disulfide bond" evidence="3">
    <location>
        <begin position="111"/>
        <end position="123"/>
    </location>
</feature>
<feature type="disulfide bond" evidence="3">
    <location>
        <begin position="117"/>
        <end position="132"/>
    </location>
</feature>
<feature type="disulfide bond" evidence="3">
    <location>
        <begin position="134"/>
        <end position="155"/>
    </location>
</feature>
<feature type="disulfide bond" evidence="4">
    <location>
        <begin position="417"/>
        <end position="449"/>
    </location>
</feature>
<feature type="disulfide bond" evidence="4">
    <location>
        <begin position="437"/>
        <end position="451"/>
    </location>
</feature>
<feature type="splice variant" id="VSP_009415" description="In isoform 2." evidence="6">
    <original>VNLLAFGVIIYKVFRHTAGLKPEVSCYENIR</original>
    <variation>IYILVSFTSHIPLNMCAECRRMVSASLHVRL</variation>
    <location>
        <begin position="632"/>
        <end position="662"/>
    </location>
</feature>
<feature type="splice variant" id="VSP_009416" description="In isoform 2." evidence="6">
    <location>
        <begin position="663"/>
        <end position="738"/>
    </location>
</feature>
<feature type="mutagenesis site" description="Abolishes cleavage." evidence="5">
    <original>T</original>
    <variation>A</variation>
    <location>
        <position position="455"/>
    </location>
</feature>
<protein>
    <recommendedName>
        <fullName>Adhesion G protein-coupled receptor L4</fullName>
    </recommendedName>
    <alternativeName>
        <fullName>EGF,latrophilin and seven transmembrane domain-containing protein 1</fullName>
    </alternativeName>
    <alternativeName>
        <fullName>EGF-TM7-latrophilin-related protein</fullName>
        <shortName>ETL protein</shortName>
    </alternativeName>
</protein>
<comment type="function">
    <text evidence="1">Endothelial orphan receptor that acts as a key regulator of angiogenesis.</text>
</comment>
<comment type="subunit">
    <text evidence="5">Heterodimer of 2 chains generated by proteolytic processing; the large extracellular N-terminal fragment and the membrane-bound C-terminal fragment predominantly remain associated and non-covalently linked.</text>
</comment>
<comment type="subcellular location">
    <subcellularLocation>
        <location evidence="5">Cell membrane</location>
        <topology evidence="2">Multi-pass membrane protein</topology>
    </subcellularLocation>
</comment>
<comment type="alternative products">
    <event type="alternative splicing"/>
    <isoform>
        <id>Q9ESC1-1</id>
        <name>1</name>
        <sequence type="displayed"/>
    </isoform>
    <isoform>
        <id>Q9ESC1-2</id>
        <name>2</name>
        <sequence type="described" ref="VSP_009415 VSP_009416"/>
    </isoform>
</comment>
<comment type="tissue specificity">
    <text evidence="5">Abundantly expressed in heart, lung, and kidney. Less evident expression is observed in brain, skeletal muscle, liver and spleen. No expression is detected in testis.</text>
</comment>
<comment type="developmental stage">
    <text evidence="5">Up-regulated in the adult heart.</text>
</comment>
<comment type="domain">
    <text evidence="5">The transmembrane domain is not required for cleavage, but it is required for dimer formation.</text>
</comment>
<comment type="PTM">
    <text evidence="5">Proteolytically cleaved into 2 subunits, an extracellular alpha subunit and a seven-transmembrane subunit.</text>
</comment>
<comment type="PTM">
    <text evidence="1">Glycosylated.</text>
</comment>
<comment type="similarity">
    <text evidence="7">Belongs to the G-protein coupled receptor 2 family. Adhesion G-protein coupled receptor (ADGR) subfamily.</text>
</comment>
<reference key="1">
    <citation type="journal article" date="2001" name="J. Biol. Chem.">
        <title>ETL, a novel seven-transmembrane receptor that is developmentally regulated in the heart.</title>
        <authorList>
            <person name="Nechiporuk T."/>
            <person name="Urness L.D."/>
            <person name="Keating M.T."/>
        </authorList>
    </citation>
    <scope>NUCLEOTIDE SEQUENCE [MRNA] (ISOFORMS 1 AND 2)</scope>
    <scope>MUTAGENESIS OF THR-455</scope>
    <scope>SUBUNIT</scope>
    <scope>TISSUE SPECIFICITY</scope>
    <scope>SUBCELLULAR LOCATION</scope>
    <scope>DEVELOPMENTAL STAGE</scope>
    <scope>PROTEOLYTIC PROCESSING</scope>
</reference>